<evidence type="ECO:0000250" key="1"/>
<evidence type="ECO:0000305" key="2"/>
<comment type="cofactor">
    <cofactor evidence="1">
        <name>Mn(2+)</name>
        <dbReference type="ChEBI" id="CHEBI:29035"/>
    </cofactor>
</comment>
<comment type="similarity">
    <text evidence="2">Belongs to the rhamnose isomerase family.</text>
</comment>
<dbReference type="EC" id="5.3.1.-"/>
<dbReference type="EMBL" id="AL591688">
    <property type="protein sequence ID" value="CAC45199.1"/>
    <property type="molecule type" value="Genomic_DNA"/>
</dbReference>
<dbReference type="RefSeq" id="NP_384733.1">
    <property type="nucleotide sequence ID" value="NC_003047.1"/>
</dbReference>
<dbReference type="SMR" id="Q92S14"/>
<dbReference type="EnsemblBacteria" id="CAC45199">
    <property type="protein sequence ID" value="CAC45199"/>
    <property type="gene ID" value="SMc02321"/>
</dbReference>
<dbReference type="KEGG" id="sme:SMc02321"/>
<dbReference type="PATRIC" id="fig|266834.11.peg.1999"/>
<dbReference type="eggNOG" id="COG4952">
    <property type="taxonomic scope" value="Bacteria"/>
</dbReference>
<dbReference type="HOGENOM" id="CLU_059875_0_0_5"/>
<dbReference type="OrthoDB" id="5174871at2"/>
<dbReference type="Proteomes" id="UP000001976">
    <property type="component" value="Chromosome"/>
</dbReference>
<dbReference type="GO" id="GO:0016853">
    <property type="term" value="F:isomerase activity"/>
    <property type="evidence" value="ECO:0007669"/>
    <property type="project" value="UniProtKB-KW"/>
</dbReference>
<dbReference type="GO" id="GO:0046872">
    <property type="term" value="F:metal ion binding"/>
    <property type="evidence" value="ECO:0007669"/>
    <property type="project" value="UniProtKB-KW"/>
</dbReference>
<dbReference type="Gene3D" id="3.20.20.150">
    <property type="entry name" value="Divalent-metal-dependent TIM barrel enzymes"/>
    <property type="match status" value="1"/>
</dbReference>
<dbReference type="InterPro" id="IPR050337">
    <property type="entry name" value="L-rhamnose_isomerase"/>
</dbReference>
<dbReference type="InterPro" id="IPR013451">
    <property type="entry name" value="L_rhamnose_iso"/>
</dbReference>
<dbReference type="InterPro" id="IPR036237">
    <property type="entry name" value="Xyl_isomerase-like_sf"/>
</dbReference>
<dbReference type="InterPro" id="IPR013022">
    <property type="entry name" value="Xyl_isomerase-like_TIM-brl"/>
</dbReference>
<dbReference type="NCBIfam" id="TIGR02629">
    <property type="entry name" value="L_rham_iso_rhiz"/>
    <property type="match status" value="1"/>
</dbReference>
<dbReference type="PANTHER" id="PTHR30268">
    <property type="entry name" value="L-RHAMNOSE ISOMERASE"/>
    <property type="match status" value="1"/>
</dbReference>
<dbReference type="PANTHER" id="PTHR30268:SF0">
    <property type="entry name" value="L-RHAMNOSE ISOMERASE"/>
    <property type="match status" value="1"/>
</dbReference>
<dbReference type="Pfam" id="PF01261">
    <property type="entry name" value="AP_endonuc_2"/>
    <property type="match status" value="1"/>
</dbReference>
<dbReference type="SUPFAM" id="SSF51658">
    <property type="entry name" value="Xylose isomerase-like"/>
    <property type="match status" value="1"/>
</dbReference>
<protein>
    <recommendedName>
        <fullName>Probable sugar isomerase R00627</fullName>
        <ecNumber>5.3.1.-</ecNumber>
    </recommendedName>
</protein>
<feature type="chain" id="PRO_0000090572" description="Probable sugar isomerase R00627">
    <location>
        <begin position="1"/>
        <end position="430"/>
    </location>
</feature>
<feature type="binding site" evidence="1">
    <location>
        <position position="257"/>
    </location>
    <ligand>
        <name>Mn(2+)</name>
        <dbReference type="ChEBI" id="CHEBI:29035"/>
    </ligand>
</feature>
<feature type="binding site" evidence="1">
    <location>
        <position position="289"/>
    </location>
    <ligand>
        <name>Mn(2+)</name>
        <dbReference type="ChEBI" id="CHEBI:29035"/>
    </ligand>
</feature>
<feature type="binding site" evidence="1">
    <location>
        <position position="291"/>
    </location>
    <ligand>
        <name>Mn(2+)</name>
        <dbReference type="ChEBI" id="CHEBI:29035"/>
    </ligand>
</feature>
<name>RHAL_RHIME</name>
<gene>
    <name type="ordered locus">R00627</name>
    <name type="ORF">SMc02321</name>
</gene>
<organism>
    <name type="scientific">Rhizobium meliloti (strain 1021)</name>
    <name type="common">Ensifer meliloti</name>
    <name type="synonym">Sinorhizobium meliloti</name>
    <dbReference type="NCBI Taxonomy" id="266834"/>
    <lineage>
        <taxon>Bacteria</taxon>
        <taxon>Pseudomonadati</taxon>
        <taxon>Pseudomonadota</taxon>
        <taxon>Alphaproteobacteria</taxon>
        <taxon>Hyphomicrobiales</taxon>
        <taxon>Rhizobiaceae</taxon>
        <taxon>Sinorhizobium/Ensifer group</taxon>
        <taxon>Sinorhizobium</taxon>
    </lineage>
</organism>
<accession>Q92S14</accession>
<keyword id="KW-0413">Isomerase</keyword>
<keyword id="KW-0464">Manganese</keyword>
<keyword id="KW-0479">Metal-binding</keyword>
<keyword id="KW-1185">Reference proteome</keyword>
<reference key="1">
    <citation type="journal article" date="2001" name="Proc. Natl. Acad. Sci. U.S.A.">
        <title>Analysis of the chromosome sequence of the legume symbiont Sinorhizobium meliloti strain 1021.</title>
        <authorList>
            <person name="Capela D."/>
            <person name="Barloy-Hubler F."/>
            <person name="Gouzy J."/>
            <person name="Bothe G."/>
            <person name="Ampe F."/>
            <person name="Batut J."/>
            <person name="Boistard P."/>
            <person name="Becker A."/>
            <person name="Boutry M."/>
            <person name="Cadieu E."/>
            <person name="Dreano S."/>
            <person name="Gloux S."/>
            <person name="Godrie T."/>
            <person name="Goffeau A."/>
            <person name="Kahn D."/>
            <person name="Kiss E."/>
            <person name="Lelaure V."/>
            <person name="Masuy D."/>
            <person name="Pohl T."/>
            <person name="Portetelle D."/>
            <person name="Puehler A."/>
            <person name="Purnelle B."/>
            <person name="Ramsperger U."/>
            <person name="Renard C."/>
            <person name="Thebault P."/>
            <person name="Vandenbol M."/>
            <person name="Weidner S."/>
            <person name="Galibert F."/>
        </authorList>
    </citation>
    <scope>NUCLEOTIDE SEQUENCE [LARGE SCALE GENOMIC DNA]</scope>
    <source>
        <strain>1021</strain>
    </source>
</reference>
<reference key="2">
    <citation type="journal article" date="2001" name="Science">
        <title>The composite genome of the legume symbiont Sinorhizobium meliloti.</title>
        <authorList>
            <person name="Galibert F."/>
            <person name="Finan T.M."/>
            <person name="Long S.R."/>
            <person name="Puehler A."/>
            <person name="Abola P."/>
            <person name="Ampe F."/>
            <person name="Barloy-Hubler F."/>
            <person name="Barnett M.J."/>
            <person name="Becker A."/>
            <person name="Boistard P."/>
            <person name="Bothe G."/>
            <person name="Boutry M."/>
            <person name="Bowser L."/>
            <person name="Buhrmester J."/>
            <person name="Cadieu E."/>
            <person name="Capela D."/>
            <person name="Chain P."/>
            <person name="Cowie A."/>
            <person name="Davis R.W."/>
            <person name="Dreano S."/>
            <person name="Federspiel N.A."/>
            <person name="Fisher R.F."/>
            <person name="Gloux S."/>
            <person name="Godrie T."/>
            <person name="Goffeau A."/>
            <person name="Golding B."/>
            <person name="Gouzy J."/>
            <person name="Gurjal M."/>
            <person name="Hernandez-Lucas I."/>
            <person name="Hong A."/>
            <person name="Huizar L."/>
            <person name="Hyman R.W."/>
            <person name="Jones T."/>
            <person name="Kahn D."/>
            <person name="Kahn M.L."/>
            <person name="Kalman S."/>
            <person name="Keating D.H."/>
            <person name="Kiss E."/>
            <person name="Komp C."/>
            <person name="Lelaure V."/>
            <person name="Masuy D."/>
            <person name="Palm C."/>
            <person name="Peck M.C."/>
            <person name="Pohl T.M."/>
            <person name="Portetelle D."/>
            <person name="Purnelle B."/>
            <person name="Ramsperger U."/>
            <person name="Surzycki R."/>
            <person name="Thebault P."/>
            <person name="Vandenbol M."/>
            <person name="Vorhoelter F.J."/>
            <person name="Weidner S."/>
            <person name="Wells D.H."/>
            <person name="Wong K."/>
            <person name="Yeh K.-C."/>
            <person name="Batut J."/>
        </authorList>
    </citation>
    <scope>NUCLEOTIDE SEQUENCE [LARGE SCALE GENOMIC DNA]</scope>
    <source>
        <strain>1021</strain>
    </source>
</reference>
<sequence>MTLMISTSVLDAENASRRDALTRDYESLGDRLARRGIDIDAVKAKVAAYGVAVPSWGVGTGGTRFARFPGPGEPRNIFDKLEDCAVIQQLTRATPAVSLHIPWDKVSDLGALKEKGSALGLSFDAMNSNTFSDAPGQAHSYKFGSLSHTDSATRRQAIEHNLECVEIGKALGSKALTVWVGDGSNFPGQSNFTRAFERYLDSMKAVYAALPDDWRIFTEHKMFEPAFYSTVVQDWGTNYLIAQELGPKAFCLVDLGHHAPNVNIEMIVARLIQFKKLGGFHFNDSKYGDDDLDTGSIDPYRLFLVFNELVDAETRAANGFDPAHMLDQSHNVTDPIESLMTSAMEVGRAYAQALIVDRKALAGYQEENDALMASETLKTAFRTDVEPILATARLENDGAIAPVAAYRASGYRARVAAERPAVAGGGGGIV</sequence>
<proteinExistence type="inferred from homology"/>